<evidence type="ECO:0000255" key="1">
    <source>
        <dbReference type="HAMAP-Rule" id="MF_01006"/>
    </source>
</evidence>
<protein>
    <recommendedName>
        <fullName evidence="1">Undecaprenyl-diphosphatase</fullName>
        <ecNumber evidence="1">3.6.1.27</ecNumber>
    </recommendedName>
    <alternativeName>
        <fullName evidence="1">Bacitracin resistance protein</fullName>
    </alternativeName>
    <alternativeName>
        <fullName evidence="1">Undecaprenyl pyrophosphate phosphatase</fullName>
    </alternativeName>
</protein>
<keyword id="KW-0046">Antibiotic resistance</keyword>
<keyword id="KW-0997">Cell inner membrane</keyword>
<keyword id="KW-1003">Cell membrane</keyword>
<keyword id="KW-0133">Cell shape</keyword>
<keyword id="KW-0961">Cell wall biogenesis/degradation</keyword>
<keyword id="KW-0378">Hydrolase</keyword>
<keyword id="KW-0472">Membrane</keyword>
<keyword id="KW-0573">Peptidoglycan synthesis</keyword>
<keyword id="KW-0812">Transmembrane</keyword>
<keyword id="KW-1133">Transmembrane helix</keyword>
<dbReference type="EC" id="3.6.1.27" evidence="1"/>
<dbReference type="EMBL" id="AP006841">
    <property type="protein sequence ID" value="BAD46805.1"/>
    <property type="molecule type" value="Genomic_DNA"/>
</dbReference>
<dbReference type="RefSeq" id="WP_005783633.1">
    <property type="nucleotide sequence ID" value="NC_006347.1"/>
</dbReference>
<dbReference type="RefSeq" id="YP_097339.1">
    <property type="nucleotide sequence ID" value="NC_006347.1"/>
</dbReference>
<dbReference type="SMR" id="Q650L9"/>
<dbReference type="STRING" id="295405.BF0056"/>
<dbReference type="KEGG" id="bfr:BF0056"/>
<dbReference type="PATRIC" id="fig|295405.11.peg.94"/>
<dbReference type="HOGENOM" id="CLU_060296_1_2_10"/>
<dbReference type="OrthoDB" id="9808289at2"/>
<dbReference type="Proteomes" id="UP000002197">
    <property type="component" value="Chromosome"/>
</dbReference>
<dbReference type="GO" id="GO:0005886">
    <property type="term" value="C:plasma membrane"/>
    <property type="evidence" value="ECO:0007669"/>
    <property type="project" value="UniProtKB-SubCell"/>
</dbReference>
<dbReference type="GO" id="GO:0050380">
    <property type="term" value="F:undecaprenyl-diphosphatase activity"/>
    <property type="evidence" value="ECO:0007669"/>
    <property type="project" value="UniProtKB-UniRule"/>
</dbReference>
<dbReference type="GO" id="GO:0071555">
    <property type="term" value="P:cell wall organization"/>
    <property type="evidence" value="ECO:0007669"/>
    <property type="project" value="UniProtKB-KW"/>
</dbReference>
<dbReference type="GO" id="GO:0009252">
    <property type="term" value="P:peptidoglycan biosynthetic process"/>
    <property type="evidence" value="ECO:0007669"/>
    <property type="project" value="UniProtKB-KW"/>
</dbReference>
<dbReference type="GO" id="GO:0008360">
    <property type="term" value="P:regulation of cell shape"/>
    <property type="evidence" value="ECO:0007669"/>
    <property type="project" value="UniProtKB-KW"/>
</dbReference>
<dbReference type="GO" id="GO:0046677">
    <property type="term" value="P:response to antibiotic"/>
    <property type="evidence" value="ECO:0007669"/>
    <property type="project" value="UniProtKB-UniRule"/>
</dbReference>
<dbReference type="HAMAP" id="MF_01006">
    <property type="entry name" value="Undec_diphosphatase"/>
    <property type="match status" value="1"/>
</dbReference>
<dbReference type="InterPro" id="IPR003824">
    <property type="entry name" value="UppP"/>
</dbReference>
<dbReference type="PANTHER" id="PTHR30622">
    <property type="entry name" value="UNDECAPRENYL-DIPHOSPHATASE"/>
    <property type="match status" value="1"/>
</dbReference>
<dbReference type="PANTHER" id="PTHR30622:SF2">
    <property type="entry name" value="UNDECAPRENYL-DIPHOSPHATASE"/>
    <property type="match status" value="1"/>
</dbReference>
<dbReference type="Pfam" id="PF02673">
    <property type="entry name" value="BacA"/>
    <property type="match status" value="1"/>
</dbReference>
<comment type="function">
    <text evidence="1">Catalyzes the dephosphorylation of undecaprenyl diphosphate (UPP). Confers resistance to bacitracin.</text>
</comment>
<comment type="catalytic activity">
    <reaction evidence="1">
        <text>di-trans,octa-cis-undecaprenyl diphosphate + H2O = di-trans,octa-cis-undecaprenyl phosphate + phosphate + H(+)</text>
        <dbReference type="Rhea" id="RHEA:28094"/>
        <dbReference type="ChEBI" id="CHEBI:15377"/>
        <dbReference type="ChEBI" id="CHEBI:15378"/>
        <dbReference type="ChEBI" id="CHEBI:43474"/>
        <dbReference type="ChEBI" id="CHEBI:58405"/>
        <dbReference type="ChEBI" id="CHEBI:60392"/>
        <dbReference type="EC" id="3.6.1.27"/>
    </reaction>
</comment>
<comment type="subcellular location">
    <subcellularLocation>
        <location evidence="1">Cell inner membrane</location>
        <topology evidence="1">Multi-pass membrane protein</topology>
    </subcellularLocation>
</comment>
<comment type="miscellaneous">
    <text>Bacitracin is thought to be involved in the inhibition of peptidoglycan synthesis by sequestering undecaprenyl diphosphate, thereby reducing the pool of lipid carrier available.</text>
</comment>
<comment type="similarity">
    <text evidence="1">Belongs to the UppP family.</text>
</comment>
<gene>
    <name evidence="1" type="primary">uppP</name>
    <name type="ordered locus">BF0056</name>
</gene>
<organism>
    <name type="scientific">Bacteroides fragilis (strain YCH46)</name>
    <dbReference type="NCBI Taxonomy" id="295405"/>
    <lineage>
        <taxon>Bacteria</taxon>
        <taxon>Pseudomonadati</taxon>
        <taxon>Bacteroidota</taxon>
        <taxon>Bacteroidia</taxon>
        <taxon>Bacteroidales</taxon>
        <taxon>Bacteroidaceae</taxon>
        <taxon>Bacteroides</taxon>
    </lineage>
</organism>
<proteinExistence type="inferred from homology"/>
<accession>Q650L9</accession>
<name>UPPP_BACFR</name>
<reference key="1">
    <citation type="journal article" date="2004" name="Proc. Natl. Acad. Sci. U.S.A.">
        <title>Genomic analysis of Bacteroides fragilis reveals extensive DNA inversions regulating cell surface adaptation.</title>
        <authorList>
            <person name="Kuwahara T."/>
            <person name="Yamashita A."/>
            <person name="Hirakawa H."/>
            <person name="Nakayama H."/>
            <person name="Toh H."/>
            <person name="Okada N."/>
            <person name="Kuhara S."/>
            <person name="Hattori M."/>
            <person name="Hayashi T."/>
            <person name="Ohnishi Y."/>
        </authorList>
    </citation>
    <scope>NUCLEOTIDE SEQUENCE [LARGE SCALE GENOMIC DNA]</scope>
    <source>
        <strain>YCH46</strain>
    </source>
</reference>
<sequence>MEWFEALILGLIQGLTEYLPVSSSGHLAIGSALFGIEGEENLAFTIVVHVATVFSTLVILWKEIDWIFRGLFKFEMNSETRYVINILISMLPIGIVGVFFKDEVEAIFGSGLLIVGCMLLLTAALLSFSYYAKPRQKENISMKDAFIIGLAQACAVLPGLSRSGSTIATGLLLGDNKAKLAQFSFLMVIPPILGEALLDGMKMIKGEAIAGDIPTLSLIVGFIAAFVSGCLACKWMINIVKKGKLIYFAIYCAIVGVVTIVVSQLQ</sequence>
<feature type="chain" id="PRO_0000151098" description="Undecaprenyl-diphosphatase">
    <location>
        <begin position="1"/>
        <end position="266"/>
    </location>
</feature>
<feature type="transmembrane region" description="Helical" evidence="1">
    <location>
        <begin position="41"/>
        <end position="61"/>
    </location>
</feature>
<feature type="transmembrane region" description="Helical" evidence="1">
    <location>
        <begin position="82"/>
        <end position="102"/>
    </location>
</feature>
<feature type="transmembrane region" description="Helical" evidence="1">
    <location>
        <begin position="106"/>
        <end position="126"/>
    </location>
</feature>
<feature type="transmembrane region" description="Helical" evidence="1">
    <location>
        <begin position="140"/>
        <end position="160"/>
    </location>
</feature>
<feature type="transmembrane region" description="Helical" evidence="1">
    <location>
        <begin position="180"/>
        <end position="200"/>
    </location>
</feature>
<feature type="transmembrane region" description="Helical" evidence="1">
    <location>
        <begin position="213"/>
        <end position="233"/>
    </location>
</feature>
<feature type="transmembrane region" description="Helical" evidence="1">
    <location>
        <begin position="245"/>
        <end position="265"/>
    </location>
</feature>